<protein>
    <recommendedName>
        <fullName>Putative uncharacterized protein YBR223W-A</fullName>
    </recommendedName>
</protein>
<dbReference type="EMBL" id="Z36092">
    <property type="status" value="NOT_ANNOTATED_CDS"/>
    <property type="molecule type" value="Genomic_DNA"/>
</dbReference>
<dbReference type="EMBL" id="AF479935">
    <property type="protein sequence ID" value="AAL79248.1"/>
    <property type="molecule type" value="Genomic_DNA"/>
</dbReference>
<dbReference type="STRING" id="4932.YBR223W-A"/>
<dbReference type="PaxDb" id="4932-YBR223W-A"/>
<dbReference type="EnsemblFungi" id="YBR223W-A_mRNA">
    <property type="protein sequence ID" value="YBR223W-A"/>
    <property type="gene ID" value="YBR223W-A"/>
</dbReference>
<dbReference type="AGR" id="SGD:S000028604"/>
<dbReference type="SGD" id="S000028604">
    <property type="gene designation" value="YBR223W-A"/>
</dbReference>
<dbReference type="HOGENOM" id="CLU_3320340_0_0_1"/>
<organism>
    <name type="scientific">Saccharomyces cerevisiae (strain ATCC 204508 / S288c)</name>
    <name type="common">Baker's yeast</name>
    <dbReference type="NCBI Taxonomy" id="559292"/>
    <lineage>
        <taxon>Eukaryota</taxon>
        <taxon>Fungi</taxon>
        <taxon>Dikarya</taxon>
        <taxon>Ascomycota</taxon>
        <taxon>Saccharomycotina</taxon>
        <taxon>Saccharomycetes</taxon>
        <taxon>Saccharomycetales</taxon>
        <taxon>Saccharomycetaceae</taxon>
        <taxon>Saccharomyces</taxon>
    </lineage>
</organism>
<accession>Q8TGQ3</accession>
<gene>
    <name type="ordered locus">YBR223W-A</name>
</gene>
<name>YB223_YEAST</name>
<comment type="miscellaneous">
    <text evidence="1">Completely overlaps TDP1.</text>
</comment>
<comment type="caution">
    <text evidence="2">Product of a dubious gene prediction unlikely to encode a functional protein. Because of that it is not part of the S.cerevisiae S288c complete/reference proteome set.</text>
</comment>
<reference key="1">
    <citation type="journal article" date="1994" name="EMBO J.">
        <title>Complete DNA sequence of yeast chromosome II.</title>
        <authorList>
            <person name="Feldmann H."/>
            <person name="Aigle M."/>
            <person name="Aljinovic G."/>
            <person name="Andre B."/>
            <person name="Baclet M.C."/>
            <person name="Barthe C."/>
            <person name="Baur A."/>
            <person name="Becam A.-M."/>
            <person name="Biteau N."/>
            <person name="Boles E."/>
            <person name="Brandt T."/>
            <person name="Brendel M."/>
            <person name="Brueckner M."/>
            <person name="Bussereau F."/>
            <person name="Christiansen C."/>
            <person name="Contreras R."/>
            <person name="Crouzet M."/>
            <person name="Cziepluch C."/>
            <person name="Demolis N."/>
            <person name="Delaveau T."/>
            <person name="Doignon F."/>
            <person name="Domdey H."/>
            <person name="Duesterhus S."/>
            <person name="Dubois E."/>
            <person name="Dujon B."/>
            <person name="El Bakkoury M."/>
            <person name="Entian K.-D."/>
            <person name="Feuermann M."/>
            <person name="Fiers W."/>
            <person name="Fobo G.M."/>
            <person name="Fritz C."/>
            <person name="Gassenhuber J."/>
            <person name="Glansdorff N."/>
            <person name="Goffeau A."/>
            <person name="Grivell L.A."/>
            <person name="de Haan M."/>
            <person name="Hein C."/>
            <person name="Herbert C.J."/>
            <person name="Hollenberg C.P."/>
            <person name="Holmstroem K."/>
            <person name="Jacq C."/>
            <person name="Jacquet M."/>
            <person name="Jauniaux J.-C."/>
            <person name="Jonniaux J.-L."/>
            <person name="Kallesoee T."/>
            <person name="Kiesau P."/>
            <person name="Kirchrath L."/>
            <person name="Koetter P."/>
            <person name="Korol S."/>
            <person name="Liebl S."/>
            <person name="Logghe M."/>
            <person name="Lohan A.J.E."/>
            <person name="Louis E.J."/>
            <person name="Li Z.Y."/>
            <person name="Maat M.J."/>
            <person name="Mallet L."/>
            <person name="Mannhaupt G."/>
            <person name="Messenguy F."/>
            <person name="Miosga T."/>
            <person name="Molemans F."/>
            <person name="Mueller S."/>
            <person name="Nasr F."/>
            <person name="Obermaier B."/>
            <person name="Perea J."/>
            <person name="Pierard A."/>
            <person name="Piravandi E."/>
            <person name="Pohl F.M."/>
            <person name="Pohl T.M."/>
            <person name="Potier S."/>
            <person name="Proft M."/>
            <person name="Purnelle B."/>
            <person name="Ramezani Rad M."/>
            <person name="Rieger M."/>
            <person name="Rose M."/>
            <person name="Schaaff-Gerstenschlaeger I."/>
            <person name="Scherens B."/>
            <person name="Schwarzlose C."/>
            <person name="Skala J."/>
            <person name="Slonimski P.P."/>
            <person name="Smits P.H.M."/>
            <person name="Souciet J.-L."/>
            <person name="Steensma H.Y."/>
            <person name="Stucka R."/>
            <person name="Urrestarazu L.A."/>
            <person name="van der Aart Q.J.M."/>
            <person name="Van Dyck L."/>
            <person name="Vassarotti A."/>
            <person name="Vetter I."/>
            <person name="Vierendeels F."/>
            <person name="Vissers S."/>
            <person name="Wagner G."/>
            <person name="de Wergifosse P."/>
            <person name="Wolfe K.H."/>
            <person name="Zagulski M."/>
            <person name="Zimmermann F.K."/>
            <person name="Mewes H.-W."/>
            <person name="Kleine K."/>
        </authorList>
    </citation>
    <scope>NUCLEOTIDE SEQUENCE [LARGE SCALE GENOMIC DNA]</scope>
    <source>
        <strain>ATCC 204508 / S288c</strain>
    </source>
</reference>
<reference key="2">
    <citation type="journal article" date="2014" name="G3 (Bethesda)">
        <title>The reference genome sequence of Saccharomyces cerevisiae: Then and now.</title>
        <authorList>
            <person name="Engel S.R."/>
            <person name="Dietrich F.S."/>
            <person name="Fisk D.G."/>
            <person name="Binkley G."/>
            <person name="Balakrishnan R."/>
            <person name="Costanzo M.C."/>
            <person name="Dwight S.S."/>
            <person name="Hitz B.C."/>
            <person name="Karra K."/>
            <person name="Nash R.S."/>
            <person name="Weng S."/>
            <person name="Wong E.D."/>
            <person name="Lloyd P."/>
            <person name="Skrzypek M.S."/>
            <person name="Miyasato S.R."/>
            <person name="Simison M."/>
            <person name="Cherry J.M."/>
        </authorList>
    </citation>
    <scope>GENOME REANNOTATION</scope>
    <source>
        <strain>ATCC 204508 / S288c</strain>
    </source>
</reference>
<reference key="3">
    <citation type="journal article" date="2002" name="Nat. Biotechnol.">
        <title>An integrated approach for finding overlooked genes in yeast.</title>
        <authorList>
            <person name="Kumar A."/>
            <person name="Harrison P.M."/>
            <person name="Cheung K.-H."/>
            <person name="Lan N."/>
            <person name="Echols N."/>
            <person name="Bertone P."/>
            <person name="Miller P."/>
            <person name="Gerstein M.B."/>
            <person name="Snyder M."/>
        </authorList>
    </citation>
    <scope>NUCLEOTIDE SEQUENCE [GENOMIC DNA]</scope>
</reference>
<feature type="chain" id="PRO_0000299796" description="Putative uncharacterized protein YBR223W-A">
    <location>
        <begin position="1"/>
        <end position="39"/>
    </location>
</feature>
<evidence type="ECO:0000305" key="1"/>
<evidence type="ECO:0000305" key="2">
    <source>
    </source>
</evidence>
<sequence length="39" mass="4380">MTGSVNGTATWVGLPAQPLRSRVKVRHVTFLVFANLRLW</sequence>
<proteinExistence type="uncertain"/>